<organism>
    <name type="scientific">Ovis aries</name>
    <name type="common">Sheep</name>
    <dbReference type="NCBI Taxonomy" id="9940"/>
    <lineage>
        <taxon>Eukaryota</taxon>
        <taxon>Metazoa</taxon>
        <taxon>Chordata</taxon>
        <taxon>Craniata</taxon>
        <taxon>Vertebrata</taxon>
        <taxon>Euteleostomi</taxon>
        <taxon>Mammalia</taxon>
        <taxon>Eutheria</taxon>
        <taxon>Laurasiatheria</taxon>
        <taxon>Artiodactyla</taxon>
        <taxon>Ruminantia</taxon>
        <taxon>Pecora</taxon>
        <taxon>Bovidae</taxon>
        <taxon>Caprinae</taxon>
        <taxon>Ovis</taxon>
    </lineage>
</organism>
<dbReference type="EMBL" id="M63123">
    <property type="protein sequence ID" value="AAA31522.1"/>
    <property type="molecule type" value="mRNA"/>
</dbReference>
<dbReference type="PIR" id="I47079">
    <property type="entry name" value="I47079"/>
</dbReference>
<dbReference type="SMR" id="P31514"/>
<dbReference type="STRING" id="9940.ENSOARP00000008709"/>
<dbReference type="MEROPS" id="I01.966"/>
<dbReference type="GlyCosmos" id="P31514">
    <property type="glycosylation" value="2 sites, No reported glycans"/>
</dbReference>
<dbReference type="PaxDb" id="9940-ENSOARP00000008709"/>
<dbReference type="eggNOG" id="KOG3649">
    <property type="taxonomic scope" value="Eukaryota"/>
</dbReference>
<dbReference type="Proteomes" id="UP000002356">
    <property type="component" value="Unplaced"/>
</dbReference>
<dbReference type="GO" id="GO:0005576">
    <property type="term" value="C:extracellular region"/>
    <property type="evidence" value="ECO:0007669"/>
    <property type="project" value="UniProtKB-SubCell"/>
</dbReference>
<dbReference type="GO" id="GO:0030154">
    <property type="term" value="P:cell differentiation"/>
    <property type="evidence" value="ECO:0007669"/>
    <property type="project" value="TreeGrafter"/>
</dbReference>
<dbReference type="CDD" id="cd00104">
    <property type="entry name" value="KAZAL_FS"/>
    <property type="match status" value="2"/>
</dbReference>
<dbReference type="FunFam" id="3.30.60.30:FF:000005">
    <property type="entry name" value="Follistatin a"/>
    <property type="match status" value="1"/>
</dbReference>
<dbReference type="FunFam" id="3.30.60.30:FF:000006">
    <property type="entry name" value="Follistatin a"/>
    <property type="match status" value="1"/>
</dbReference>
<dbReference type="FunFam" id="3.30.60.30:FF:000009">
    <property type="entry name" value="Follistatin a"/>
    <property type="match status" value="1"/>
</dbReference>
<dbReference type="FunFam" id="3.90.290.10:FF:000013">
    <property type="entry name" value="Follistatin a"/>
    <property type="match status" value="1"/>
</dbReference>
<dbReference type="Gene3D" id="3.30.60.30">
    <property type="match status" value="3"/>
</dbReference>
<dbReference type="Gene3D" id="3.90.290.10">
    <property type="entry name" value="TGF-beta binding (TB) domain"/>
    <property type="match status" value="1"/>
</dbReference>
<dbReference type="InterPro" id="IPR003645">
    <property type="entry name" value="Fol_N"/>
</dbReference>
<dbReference type="InterPro" id="IPR015369">
    <property type="entry name" value="Follistatin/Osteonectin_EGF"/>
</dbReference>
<dbReference type="InterPro" id="IPR002350">
    <property type="entry name" value="Kazal_dom"/>
</dbReference>
<dbReference type="InterPro" id="IPR036058">
    <property type="entry name" value="Kazal_dom_sf"/>
</dbReference>
<dbReference type="InterPro" id="IPR050653">
    <property type="entry name" value="Prot_Inhib_GrowthFact_Antg"/>
</dbReference>
<dbReference type="InterPro" id="IPR017878">
    <property type="entry name" value="TB_dom"/>
</dbReference>
<dbReference type="InterPro" id="IPR036773">
    <property type="entry name" value="TB_dom_sf"/>
</dbReference>
<dbReference type="PANTHER" id="PTHR10913:SF45">
    <property type="entry name" value="FOLLISTATIN, ISOFORM A-RELATED"/>
    <property type="match status" value="1"/>
</dbReference>
<dbReference type="PANTHER" id="PTHR10913">
    <property type="entry name" value="FOLLISTATIN-RELATED"/>
    <property type="match status" value="1"/>
</dbReference>
<dbReference type="Pfam" id="PF09289">
    <property type="entry name" value="FOLN"/>
    <property type="match status" value="1"/>
</dbReference>
<dbReference type="Pfam" id="PF21333">
    <property type="entry name" value="FST_N"/>
    <property type="match status" value="1"/>
</dbReference>
<dbReference type="Pfam" id="PF07648">
    <property type="entry name" value="Kazal_2"/>
    <property type="match status" value="3"/>
</dbReference>
<dbReference type="SMART" id="SM00274">
    <property type="entry name" value="FOLN"/>
    <property type="match status" value="3"/>
</dbReference>
<dbReference type="SMART" id="SM00280">
    <property type="entry name" value="KAZAL"/>
    <property type="match status" value="3"/>
</dbReference>
<dbReference type="SUPFAM" id="SSF100895">
    <property type="entry name" value="Kazal-type serine protease inhibitors"/>
    <property type="match status" value="3"/>
</dbReference>
<dbReference type="SUPFAM" id="SSF57581">
    <property type="entry name" value="TB module/8-cys domain"/>
    <property type="match status" value="1"/>
</dbReference>
<dbReference type="PROSITE" id="PS51465">
    <property type="entry name" value="KAZAL_2"/>
    <property type="match status" value="3"/>
</dbReference>
<dbReference type="PROSITE" id="PS51364">
    <property type="entry name" value="TB"/>
    <property type="match status" value="1"/>
</dbReference>
<keyword id="KW-1015">Disulfide bond</keyword>
<keyword id="KW-0325">Glycoprotein</keyword>
<keyword id="KW-1185">Reference proteome</keyword>
<keyword id="KW-0677">Repeat</keyword>
<keyword id="KW-0964">Secreted</keyword>
<keyword id="KW-0732">Signal</keyword>
<gene>
    <name evidence="1" type="primary">FST</name>
</gene>
<proteinExistence type="evidence at transcript level"/>
<accession>P31514</accession>
<evidence type="ECO:0000250" key="1">
    <source>
        <dbReference type="UniProtKB" id="P19883"/>
    </source>
</evidence>
<evidence type="ECO:0000250" key="2">
    <source>
        <dbReference type="UniProtKB" id="P21674"/>
    </source>
</evidence>
<evidence type="ECO:0000255" key="3"/>
<evidence type="ECO:0000255" key="4">
    <source>
        <dbReference type="PROSITE-ProRule" id="PRU00697"/>
    </source>
</evidence>
<evidence type="ECO:0000255" key="5">
    <source>
        <dbReference type="PROSITE-ProRule" id="PRU00798"/>
    </source>
</evidence>
<evidence type="ECO:0000256" key="6">
    <source>
        <dbReference type="SAM" id="MobiDB-lite"/>
    </source>
</evidence>
<evidence type="ECO:0000303" key="7">
    <source>
    </source>
</evidence>
<evidence type="ECO:0000305" key="8"/>
<sequence>PGGVCLLLLLLCQFMEDRSAQAGNCWLRQAKNGRCQVLYKTELSKEECCSTGRLSTSWTEEDVNDNTLFKWMIFNGGAPNCIPCKETCENVDCGPGKKCRMNKKNKPRCVCAPDCSNITWKGPVCGLDGKTYRNECALLKARCKEQPELEVQYQGKCKKTCRDVFCPGSSTCVVDQTNNAYCVTCNRICPEPTSSEQYLCGNDGVTYPSACHLRKATCLLGRSIGLAYEGKCIKAKSCEDIQCTGGKKCLWDFKVGRGRCSLCGELCPESKSEEPVCASDNATYASECAMKEAACSSGVLLEVKHSGSCNSISEDTEDEEEDEDQDYSFPISSILEW</sequence>
<protein>
    <recommendedName>
        <fullName evidence="7">Follistatin</fullName>
        <shortName>FS</shortName>
    </recommendedName>
    <alternativeName>
        <fullName evidence="2">Activin-binding protein</fullName>
    </alternativeName>
</protein>
<comment type="function">
    <text>Binds directly to activin and functions as an activin antagonist. Specific inhibitor of the biosynthesis and secretion of pituitary follicle stimulating hormone (FSH).</text>
</comment>
<comment type="subunit">
    <text evidence="8">Monomer.</text>
</comment>
<comment type="subcellular location">
    <subcellularLocation>
        <location>Secreted</location>
    </subcellularLocation>
</comment>
<reference key="1">
    <citation type="journal article" date="1992" name="J. Mol. Endocrinol.">
        <title>Ovine follistatin: characterization of cDNA and expression in sheep ovary during the luteal phase of the oestrous cycle.</title>
        <authorList>
            <person name="Tisdall D.J."/>
            <person name="Hill D."/>
            <person name="Petersen G.B."/>
            <person name="Fleming J.S."/>
        </authorList>
    </citation>
    <scope>NUCLEOTIDE SEQUENCE [MRNA]</scope>
</reference>
<name>FST_SHEEP</name>
<feature type="signal peptide">
    <location>
        <begin position="1" status="less than"/>
        <end position="22"/>
    </location>
</feature>
<feature type="chain" id="PRO_0000010107" description="Follistatin">
    <location>
        <begin position="23"/>
        <end position="337"/>
    </location>
</feature>
<feature type="domain" description="TB" evidence="4">
    <location>
        <begin position="23"/>
        <end position="96"/>
    </location>
</feature>
<feature type="domain" description="Follistatin-like 1">
    <location>
        <begin position="87"/>
        <end position="110"/>
    </location>
</feature>
<feature type="domain" description="Kazal-like 1" evidence="5">
    <location>
        <begin position="105"/>
        <end position="159"/>
    </location>
</feature>
<feature type="domain" description="Follistatin-like 2">
    <location>
        <begin position="160"/>
        <end position="183"/>
    </location>
</feature>
<feature type="domain" description="Kazal-like 2" evidence="5">
    <location>
        <begin position="179"/>
        <end position="234"/>
    </location>
</feature>
<feature type="domain" description="Follistatin-like 3">
    <location>
        <begin position="237"/>
        <end position="261"/>
    </location>
</feature>
<feature type="domain" description="Kazal-like 3" evidence="5">
    <location>
        <begin position="254"/>
        <end position="311"/>
    </location>
</feature>
<feature type="region of interest" description="Disordered" evidence="6">
    <location>
        <begin position="309"/>
        <end position="337"/>
    </location>
</feature>
<feature type="compositionally biased region" description="Acidic residues" evidence="6">
    <location>
        <begin position="314"/>
        <end position="326"/>
    </location>
</feature>
<feature type="glycosylation site" description="N-linked (GlcNAc...) asparagine" evidence="3">
    <location>
        <position position="117"/>
    </location>
</feature>
<feature type="glycosylation site" description="N-linked (GlcNAc...) asparagine" evidence="3">
    <location>
        <position position="281"/>
    </location>
</feature>
<feature type="disulfide bond" evidence="1 4">
    <location>
        <begin position="25"/>
        <end position="48"/>
    </location>
</feature>
<feature type="disulfide bond" evidence="1 4">
    <location>
        <begin position="35"/>
        <end position="81"/>
    </location>
</feature>
<feature type="disulfide bond" evidence="1 4">
    <location>
        <begin position="49"/>
        <end position="84"/>
    </location>
</feature>
<feature type="disulfide bond" evidence="1">
    <location>
        <begin position="88"/>
        <end position="99"/>
    </location>
</feature>
<feature type="disulfide bond" evidence="1">
    <location>
        <begin position="93"/>
        <end position="109"/>
    </location>
</feature>
<feature type="disulfide bond" evidence="1">
    <location>
        <begin position="111"/>
        <end position="143"/>
    </location>
</feature>
<feature type="disulfide bond" evidence="1">
    <location>
        <begin position="115"/>
        <end position="136"/>
    </location>
</feature>
<feature type="disulfide bond" evidence="1">
    <location>
        <begin position="125"/>
        <end position="157"/>
    </location>
</feature>
<feature type="disulfide bond" evidence="1">
    <location>
        <begin position="161"/>
        <end position="172"/>
    </location>
</feature>
<feature type="disulfide bond" evidence="1">
    <location>
        <begin position="166"/>
        <end position="182"/>
    </location>
</feature>
<feature type="disulfide bond" evidence="1">
    <location>
        <begin position="185"/>
        <end position="218"/>
    </location>
</feature>
<feature type="disulfide bond" evidence="1">
    <location>
        <begin position="189"/>
        <end position="211"/>
    </location>
</feature>
<feature type="disulfide bond" evidence="1">
    <location>
        <begin position="200"/>
        <end position="232"/>
    </location>
</feature>
<feature type="disulfide bond" evidence="1">
    <location>
        <begin position="238"/>
        <end position="249"/>
    </location>
</feature>
<feature type="disulfide bond" evidence="1">
    <location>
        <begin position="243"/>
        <end position="260"/>
    </location>
</feature>
<feature type="disulfide bond" evidence="1">
    <location>
        <begin position="263"/>
        <end position="295"/>
    </location>
</feature>
<feature type="disulfide bond" evidence="1">
    <location>
        <begin position="267"/>
        <end position="288"/>
    </location>
</feature>
<feature type="disulfide bond" evidence="1">
    <location>
        <begin position="277"/>
        <end position="309"/>
    </location>
</feature>
<feature type="non-terminal residue">
    <location>
        <position position="1"/>
    </location>
</feature>